<feature type="chain" id="PRO_0000094269" description="Elongation factor P">
    <location>
        <begin position="1"/>
        <end position="189"/>
    </location>
</feature>
<feature type="modified residue" description="N6-(3,6-diaminohexanoyl)-5-hydroxylysine" evidence="1">
    <location>
        <position position="34"/>
    </location>
</feature>
<comment type="function">
    <text evidence="1">Involved in peptide bond synthesis. Alleviates ribosome stalling that occurs when 3 or more consecutive Pro residues or the sequence PPG is present in a protein, possibly by augmenting the peptidyl transferase activity of the ribosome. Modification of Lys-34 is required for alleviation.</text>
</comment>
<comment type="pathway">
    <text evidence="1">Protein biosynthesis; polypeptide chain elongation.</text>
</comment>
<comment type="subcellular location">
    <subcellularLocation>
        <location evidence="1">Cytoplasm</location>
    </subcellularLocation>
</comment>
<comment type="PTM">
    <text evidence="1">May be beta-lysylated on the epsilon-amino group of Lys-34 by the combined action of EpmA and EpmB, and then hydroxylated on the C5 position of the same residue by EpmC (if this protein is present). Lysylation is critical for the stimulatory effect of EF-P on peptide-bond formation. The lysylation moiety may extend toward the peptidyltransferase center and stabilize the terminal 3-CCA end of the tRNA. Hydroxylation of the C5 position on Lys-34 may allow additional potential stabilizing hydrogen-bond interactions with the P-tRNA.</text>
</comment>
<comment type="similarity">
    <text evidence="1">Belongs to the elongation factor P family.</text>
</comment>
<accession>Q5X888</accession>
<keyword id="KW-0963">Cytoplasm</keyword>
<keyword id="KW-0251">Elongation factor</keyword>
<keyword id="KW-0379">Hydroxylation</keyword>
<keyword id="KW-0648">Protein biosynthesis</keyword>
<gene>
    <name evidence="1" type="primary">efp</name>
    <name type="ordered locus">lpp0365</name>
</gene>
<dbReference type="EMBL" id="CR628336">
    <property type="protein sequence ID" value="CAH11513.1"/>
    <property type="molecule type" value="Genomic_DNA"/>
</dbReference>
<dbReference type="RefSeq" id="WP_011212988.1">
    <property type="nucleotide sequence ID" value="NC_006368.1"/>
</dbReference>
<dbReference type="SMR" id="Q5X888"/>
<dbReference type="KEGG" id="lpp:lpp0365"/>
<dbReference type="LegioList" id="lpp0365"/>
<dbReference type="HOGENOM" id="CLU_074944_0_0_6"/>
<dbReference type="UniPathway" id="UPA00345"/>
<dbReference type="GO" id="GO:0005737">
    <property type="term" value="C:cytoplasm"/>
    <property type="evidence" value="ECO:0007669"/>
    <property type="project" value="UniProtKB-SubCell"/>
</dbReference>
<dbReference type="GO" id="GO:0003746">
    <property type="term" value="F:translation elongation factor activity"/>
    <property type="evidence" value="ECO:0007669"/>
    <property type="project" value="UniProtKB-UniRule"/>
</dbReference>
<dbReference type="GO" id="GO:0043043">
    <property type="term" value="P:peptide biosynthetic process"/>
    <property type="evidence" value="ECO:0007669"/>
    <property type="project" value="InterPro"/>
</dbReference>
<dbReference type="CDD" id="cd04470">
    <property type="entry name" value="S1_EF-P_repeat_1"/>
    <property type="match status" value="1"/>
</dbReference>
<dbReference type="CDD" id="cd05794">
    <property type="entry name" value="S1_EF-P_repeat_2"/>
    <property type="match status" value="1"/>
</dbReference>
<dbReference type="FunFam" id="2.30.30.30:FF:000003">
    <property type="entry name" value="Elongation factor P"/>
    <property type="match status" value="1"/>
</dbReference>
<dbReference type="FunFam" id="2.40.50.140:FF:000004">
    <property type="entry name" value="Elongation factor P"/>
    <property type="match status" value="1"/>
</dbReference>
<dbReference type="FunFam" id="2.40.50.140:FF:000009">
    <property type="entry name" value="Elongation factor P"/>
    <property type="match status" value="1"/>
</dbReference>
<dbReference type="Gene3D" id="2.30.30.30">
    <property type="match status" value="1"/>
</dbReference>
<dbReference type="Gene3D" id="2.40.50.140">
    <property type="entry name" value="Nucleic acid-binding proteins"/>
    <property type="match status" value="2"/>
</dbReference>
<dbReference type="HAMAP" id="MF_00141">
    <property type="entry name" value="EF_P"/>
    <property type="match status" value="1"/>
</dbReference>
<dbReference type="InterPro" id="IPR015365">
    <property type="entry name" value="Elong-fact-P_C"/>
</dbReference>
<dbReference type="InterPro" id="IPR012340">
    <property type="entry name" value="NA-bd_OB-fold"/>
</dbReference>
<dbReference type="InterPro" id="IPR014722">
    <property type="entry name" value="Rib_uL2_dom2"/>
</dbReference>
<dbReference type="InterPro" id="IPR020599">
    <property type="entry name" value="Transl_elong_fac_P/YeiP"/>
</dbReference>
<dbReference type="InterPro" id="IPR013185">
    <property type="entry name" value="Transl_elong_KOW-like"/>
</dbReference>
<dbReference type="InterPro" id="IPR001059">
    <property type="entry name" value="Transl_elong_P/YeiP_cen"/>
</dbReference>
<dbReference type="InterPro" id="IPR013852">
    <property type="entry name" value="Transl_elong_P/YeiP_CS"/>
</dbReference>
<dbReference type="InterPro" id="IPR011768">
    <property type="entry name" value="Transl_elongation_fac_P"/>
</dbReference>
<dbReference type="InterPro" id="IPR008991">
    <property type="entry name" value="Translation_prot_SH3-like_sf"/>
</dbReference>
<dbReference type="NCBIfam" id="TIGR00038">
    <property type="entry name" value="efp"/>
    <property type="match status" value="1"/>
</dbReference>
<dbReference type="NCBIfam" id="NF001810">
    <property type="entry name" value="PRK00529.1"/>
    <property type="match status" value="1"/>
</dbReference>
<dbReference type="PANTHER" id="PTHR30053">
    <property type="entry name" value="ELONGATION FACTOR P"/>
    <property type="match status" value="1"/>
</dbReference>
<dbReference type="PANTHER" id="PTHR30053:SF12">
    <property type="entry name" value="ELONGATION FACTOR P (EF-P) FAMILY PROTEIN"/>
    <property type="match status" value="1"/>
</dbReference>
<dbReference type="Pfam" id="PF01132">
    <property type="entry name" value="EFP"/>
    <property type="match status" value="1"/>
</dbReference>
<dbReference type="Pfam" id="PF08207">
    <property type="entry name" value="EFP_N"/>
    <property type="match status" value="1"/>
</dbReference>
<dbReference type="Pfam" id="PF09285">
    <property type="entry name" value="Elong-fact-P_C"/>
    <property type="match status" value="1"/>
</dbReference>
<dbReference type="PIRSF" id="PIRSF005901">
    <property type="entry name" value="EF-P"/>
    <property type="match status" value="1"/>
</dbReference>
<dbReference type="SMART" id="SM01185">
    <property type="entry name" value="EFP"/>
    <property type="match status" value="1"/>
</dbReference>
<dbReference type="SMART" id="SM00841">
    <property type="entry name" value="Elong-fact-P_C"/>
    <property type="match status" value="1"/>
</dbReference>
<dbReference type="SUPFAM" id="SSF50249">
    <property type="entry name" value="Nucleic acid-binding proteins"/>
    <property type="match status" value="2"/>
</dbReference>
<dbReference type="SUPFAM" id="SSF50104">
    <property type="entry name" value="Translation proteins SH3-like domain"/>
    <property type="match status" value="1"/>
</dbReference>
<dbReference type="PROSITE" id="PS01275">
    <property type="entry name" value="EFP"/>
    <property type="match status" value="1"/>
</dbReference>
<evidence type="ECO:0000255" key="1">
    <source>
        <dbReference type="HAMAP-Rule" id="MF_00141"/>
    </source>
</evidence>
<protein>
    <recommendedName>
        <fullName evidence="1">Elongation factor P</fullName>
        <shortName evidence="1">EF-P</shortName>
    </recommendedName>
</protein>
<proteinExistence type="inferred from homology"/>
<organism>
    <name type="scientific">Legionella pneumophila (strain Paris)</name>
    <dbReference type="NCBI Taxonomy" id="297246"/>
    <lineage>
        <taxon>Bacteria</taxon>
        <taxon>Pseudomonadati</taxon>
        <taxon>Pseudomonadota</taxon>
        <taxon>Gammaproteobacteria</taxon>
        <taxon>Legionellales</taxon>
        <taxon>Legionellaceae</taxon>
        <taxon>Legionella</taxon>
    </lineage>
</organism>
<sequence length="189" mass="20927">MAVYSTNEFKNGLKVMVDDAPCSILDCEFVKPGKGQAFTRIKIRNLKTGRVVERTFKSGDTLPSADVADVEMQYLYNDGEYWHFMVPDTFEQYAVTENVLADAAQWLKEQDVCVLTLWNNEPIQVTPPNFVILAITETDPGLKGDTSGGGGKPATLETGAVVRVPLFVQTGELIKVDTRKGEYVSRAKE</sequence>
<reference key="1">
    <citation type="journal article" date="2004" name="Nat. Genet.">
        <title>Evidence in the Legionella pneumophila genome for exploitation of host cell functions and high genome plasticity.</title>
        <authorList>
            <person name="Cazalet C."/>
            <person name="Rusniok C."/>
            <person name="Brueggemann H."/>
            <person name="Zidane N."/>
            <person name="Magnier A."/>
            <person name="Ma L."/>
            <person name="Tichit M."/>
            <person name="Jarraud S."/>
            <person name="Bouchier C."/>
            <person name="Vandenesch F."/>
            <person name="Kunst F."/>
            <person name="Etienne J."/>
            <person name="Glaser P."/>
            <person name="Buchrieser C."/>
        </authorList>
    </citation>
    <scope>NUCLEOTIDE SEQUENCE [LARGE SCALE GENOMIC DNA]</scope>
    <source>
        <strain>Paris</strain>
    </source>
</reference>
<name>EFP_LEGPA</name>